<organism>
    <name type="scientific">Gloeobacter violaceus (strain ATCC 29082 / PCC 7421)</name>
    <dbReference type="NCBI Taxonomy" id="251221"/>
    <lineage>
        <taxon>Bacteria</taxon>
        <taxon>Bacillati</taxon>
        <taxon>Cyanobacteriota</taxon>
        <taxon>Cyanophyceae</taxon>
        <taxon>Gloeobacterales</taxon>
        <taxon>Gloeobacteraceae</taxon>
        <taxon>Gloeobacter</taxon>
    </lineage>
</organism>
<keyword id="KW-1185">Reference proteome</keyword>
<protein>
    <recommendedName>
        <fullName evidence="1">ATP-dependent Clp protease adapter protein ClpS</fullName>
    </recommendedName>
</protein>
<dbReference type="EMBL" id="BA000045">
    <property type="protein sequence ID" value="BAC88687.1"/>
    <property type="molecule type" value="Genomic_DNA"/>
</dbReference>
<dbReference type="RefSeq" id="NP_923692.1">
    <property type="nucleotide sequence ID" value="NC_005125.1"/>
</dbReference>
<dbReference type="RefSeq" id="WP_011140748.1">
    <property type="nucleotide sequence ID" value="NC_005125.1"/>
</dbReference>
<dbReference type="SMR" id="Q7NML9"/>
<dbReference type="STRING" id="251221.gene:10758222"/>
<dbReference type="EnsemblBacteria" id="BAC88687">
    <property type="protein sequence ID" value="BAC88687"/>
    <property type="gene ID" value="BAC88687"/>
</dbReference>
<dbReference type="KEGG" id="gvi:gsl0746"/>
<dbReference type="PATRIC" id="fig|251221.4.peg.759"/>
<dbReference type="eggNOG" id="COG2127">
    <property type="taxonomic scope" value="Bacteria"/>
</dbReference>
<dbReference type="HOGENOM" id="CLU_134083_1_1_3"/>
<dbReference type="InParanoid" id="Q7NML9"/>
<dbReference type="OrthoDB" id="9796121at2"/>
<dbReference type="PhylomeDB" id="Q7NML9"/>
<dbReference type="Proteomes" id="UP000000557">
    <property type="component" value="Chromosome"/>
</dbReference>
<dbReference type="GO" id="GO:0030163">
    <property type="term" value="P:protein catabolic process"/>
    <property type="evidence" value="ECO:0007669"/>
    <property type="project" value="InterPro"/>
</dbReference>
<dbReference type="GO" id="GO:0006508">
    <property type="term" value="P:proteolysis"/>
    <property type="evidence" value="ECO:0007669"/>
    <property type="project" value="UniProtKB-UniRule"/>
</dbReference>
<dbReference type="Gene3D" id="3.30.1390.10">
    <property type="match status" value="1"/>
</dbReference>
<dbReference type="HAMAP" id="MF_00302">
    <property type="entry name" value="ClpS"/>
    <property type="match status" value="1"/>
</dbReference>
<dbReference type="InterPro" id="IPR022935">
    <property type="entry name" value="ClpS"/>
</dbReference>
<dbReference type="InterPro" id="IPR003769">
    <property type="entry name" value="ClpS_core"/>
</dbReference>
<dbReference type="InterPro" id="IPR014719">
    <property type="entry name" value="Ribosomal_bL12_C/ClpS-like"/>
</dbReference>
<dbReference type="NCBIfam" id="NF000671">
    <property type="entry name" value="PRK00033.1-4"/>
    <property type="match status" value="1"/>
</dbReference>
<dbReference type="PANTHER" id="PTHR33473:SF19">
    <property type="entry name" value="ATP-DEPENDENT CLP PROTEASE ADAPTER PROTEIN CLPS"/>
    <property type="match status" value="1"/>
</dbReference>
<dbReference type="PANTHER" id="PTHR33473">
    <property type="entry name" value="ATP-DEPENDENT CLP PROTEASE ADAPTER PROTEIN CLPS1, CHLOROPLASTIC"/>
    <property type="match status" value="1"/>
</dbReference>
<dbReference type="Pfam" id="PF02617">
    <property type="entry name" value="ClpS"/>
    <property type="match status" value="1"/>
</dbReference>
<dbReference type="SUPFAM" id="SSF54736">
    <property type="entry name" value="ClpS-like"/>
    <property type="match status" value="1"/>
</dbReference>
<name>CLPS_GLOVI</name>
<reference key="1">
    <citation type="journal article" date="2003" name="DNA Res.">
        <title>Complete genome structure of Gloeobacter violaceus PCC 7421, a cyanobacterium that lacks thylakoids.</title>
        <authorList>
            <person name="Nakamura Y."/>
            <person name="Kaneko T."/>
            <person name="Sato S."/>
            <person name="Mimuro M."/>
            <person name="Miyashita H."/>
            <person name="Tsuchiya T."/>
            <person name="Sasamoto S."/>
            <person name="Watanabe A."/>
            <person name="Kawashima K."/>
            <person name="Kishida Y."/>
            <person name="Kiyokawa C."/>
            <person name="Kohara M."/>
            <person name="Matsumoto M."/>
            <person name="Matsuno A."/>
            <person name="Nakazaki N."/>
            <person name="Shimpo S."/>
            <person name="Takeuchi C."/>
            <person name="Yamada M."/>
            <person name="Tabata S."/>
        </authorList>
    </citation>
    <scope>NUCLEOTIDE SEQUENCE [LARGE SCALE GENOMIC DNA]</scope>
    <source>
        <strain>ATCC 29082 / PCC 7421</strain>
    </source>
</reference>
<accession>Q7NML9</accession>
<proteinExistence type="inferred from homology"/>
<feature type="chain" id="PRO_0000215711" description="ATP-dependent Clp protease adapter protein ClpS">
    <location>
        <begin position="1"/>
        <end position="93"/>
    </location>
</feature>
<gene>
    <name evidence="1" type="primary">clpS</name>
    <name type="ordered locus">gsl0746</name>
</gene>
<sequence length="93" mass="10669">MSTETLERKSVQRKPMPLYKVLLHNDDHTPMNYVIEVLMKTIPKMQPSKARKIMLEAHNGGVAVVIVCALEHAEFYSESLNRHNLTSTYEPDC</sequence>
<evidence type="ECO:0000255" key="1">
    <source>
        <dbReference type="HAMAP-Rule" id="MF_00302"/>
    </source>
</evidence>
<comment type="function">
    <text evidence="1">Involved in the modulation of the specificity of the ClpAP-mediated ATP-dependent protein degradation.</text>
</comment>
<comment type="subunit">
    <text evidence="1">Binds to the N-terminal domain of the chaperone ClpA.</text>
</comment>
<comment type="similarity">
    <text evidence="1">Belongs to the ClpS family.</text>
</comment>